<dbReference type="EC" id="4.3.3.6" evidence="1"/>
<dbReference type="EC" id="3.5.1.2" evidence="1"/>
<dbReference type="EMBL" id="AE010299">
    <property type="protein sequence ID" value="AAM04979.1"/>
    <property type="molecule type" value="Genomic_DNA"/>
</dbReference>
<dbReference type="RefSeq" id="WP_011021577.1">
    <property type="nucleotide sequence ID" value="NC_003552.1"/>
</dbReference>
<dbReference type="SMR" id="Q8TQH7"/>
<dbReference type="FunCoup" id="Q8TQH7">
    <property type="interactions" value="125"/>
</dbReference>
<dbReference type="STRING" id="188937.MA_1566"/>
<dbReference type="EnsemblBacteria" id="AAM04979">
    <property type="protein sequence ID" value="AAM04979"/>
    <property type="gene ID" value="MA_1566"/>
</dbReference>
<dbReference type="GeneID" id="1473454"/>
<dbReference type="KEGG" id="mac:MA_1566"/>
<dbReference type="HOGENOM" id="CLU_069674_2_0_2"/>
<dbReference type="InParanoid" id="Q8TQH7"/>
<dbReference type="OrthoDB" id="26717at2157"/>
<dbReference type="PhylomeDB" id="Q8TQH7"/>
<dbReference type="UniPathway" id="UPA00245"/>
<dbReference type="Proteomes" id="UP000002487">
    <property type="component" value="Chromosome"/>
</dbReference>
<dbReference type="GO" id="GO:0005829">
    <property type="term" value="C:cytosol"/>
    <property type="evidence" value="ECO:0000318"/>
    <property type="project" value="GO_Central"/>
</dbReference>
<dbReference type="GO" id="GO:1903600">
    <property type="term" value="C:glutaminase complex"/>
    <property type="evidence" value="ECO:0000318"/>
    <property type="project" value="GO_Central"/>
</dbReference>
<dbReference type="GO" id="GO:0004359">
    <property type="term" value="F:glutaminase activity"/>
    <property type="evidence" value="ECO:0007669"/>
    <property type="project" value="UniProtKB-UniRule"/>
</dbReference>
<dbReference type="GO" id="GO:0036381">
    <property type="term" value="F:pyridoxal 5'-phosphate synthase (glutamine hydrolysing) activity"/>
    <property type="evidence" value="ECO:0007669"/>
    <property type="project" value="UniProtKB-UniRule"/>
</dbReference>
<dbReference type="GO" id="GO:0006543">
    <property type="term" value="P:glutamine catabolic process"/>
    <property type="evidence" value="ECO:0007669"/>
    <property type="project" value="UniProtKB-UniRule"/>
</dbReference>
<dbReference type="GO" id="GO:0042823">
    <property type="term" value="P:pyridoxal phosphate biosynthetic process"/>
    <property type="evidence" value="ECO:0000318"/>
    <property type="project" value="GO_Central"/>
</dbReference>
<dbReference type="GO" id="GO:0008614">
    <property type="term" value="P:pyridoxine metabolic process"/>
    <property type="evidence" value="ECO:0000318"/>
    <property type="project" value="GO_Central"/>
</dbReference>
<dbReference type="CDD" id="cd01749">
    <property type="entry name" value="GATase1_PB"/>
    <property type="match status" value="1"/>
</dbReference>
<dbReference type="FunFam" id="3.40.50.880:FF:000041">
    <property type="entry name" value="Glutamine amidotransferase subunit pdxT, putative"/>
    <property type="match status" value="1"/>
</dbReference>
<dbReference type="Gene3D" id="3.40.50.880">
    <property type="match status" value="1"/>
</dbReference>
<dbReference type="HAMAP" id="MF_01615">
    <property type="entry name" value="PdxT"/>
    <property type="match status" value="1"/>
</dbReference>
<dbReference type="InterPro" id="IPR029062">
    <property type="entry name" value="Class_I_gatase-like"/>
</dbReference>
<dbReference type="InterPro" id="IPR002161">
    <property type="entry name" value="PdxT/SNO"/>
</dbReference>
<dbReference type="InterPro" id="IPR021196">
    <property type="entry name" value="PdxT/SNO_CS"/>
</dbReference>
<dbReference type="NCBIfam" id="TIGR03800">
    <property type="entry name" value="PLP_synth_Pdx2"/>
    <property type="match status" value="1"/>
</dbReference>
<dbReference type="PANTHER" id="PTHR31559">
    <property type="entry name" value="PYRIDOXAL 5'-PHOSPHATE SYNTHASE SUBUNIT SNO"/>
    <property type="match status" value="1"/>
</dbReference>
<dbReference type="PANTHER" id="PTHR31559:SF0">
    <property type="entry name" value="PYRIDOXAL 5'-PHOSPHATE SYNTHASE SUBUNIT SNO1-RELATED"/>
    <property type="match status" value="1"/>
</dbReference>
<dbReference type="Pfam" id="PF01174">
    <property type="entry name" value="SNO"/>
    <property type="match status" value="1"/>
</dbReference>
<dbReference type="PIRSF" id="PIRSF005639">
    <property type="entry name" value="Glut_amidoT_SNO"/>
    <property type="match status" value="1"/>
</dbReference>
<dbReference type="SUPFAM" id="SSF52317">
    <property type="entry name" value="Class I glutamine amidotransferase-like"/>
    <property type="match status" value="1"/>
</dbReference>
<dbReference type="PROSITE" id="PS01236">
    <property type="entry name" value="PDXT_SNO_1"/>
    <property type="match status" value="1"/>
</dbReference>
<dbReference type="PROSITE" id="PS51130">
    <property type="entry name" value="PDXT_SNO_2"/>
    <property type="match status" value="1"/>
</dbReference>
<protein>
    <recommendedName>
        <fullName evidence="1">Pyridoxal 5'-phosphate synthase subunit PdxT</fullName>
        <ecNumber evidence="1">4.3.3.6</ecNumber>
    </recommendedName>
    <alternativeName>
        <fullName evidence="1">Pdx2</fullName>
    </alternativeName>
    <alternativeName>
        <fullName evidence="1">Pyridoxal 5'-phosphate synthase glutaminase subunit</fullName>
        <ecNumber evidence="1">3.5.1.2</ecNumber>
    </alternativeName>
</protein>
<sequence length="199" mass="21392">MKIGVIAIQGAVSEHVDALRRALAERGVEAEVVEIKHKGIVPECSGIVIPGGESTTLCRLLAREGIGEEIKEAAARGVPVLGTCAGLIVLAKEGDRQVEKTGQELLGIMDTRVNRNAFGRQRDSFEAELDVVILDSPFTGVFIRAPGIISCGPGVRVLSRLEDMIIAAEQGNVLALAFHPELTDDLRIHQYFLNKVLSC</sequence>
<accession>Q8TQH7</accession>
<proteinExistence type="inferred from homology"/>
<name>PDXT_METAC</name>
<feature type="chain" id="PRO_0000135679" description="Pyridoxal 5'-phosphate synthase subunit PdxT">
    <location>
        <begin position="1"/>
        <end position="199"/>
    </location>
</feature>
<feature type="active site" description="Nucleophile" evidence="1">
    <location>
        <position position="84"/>
    </location>
</feature>
<feature type="active site" description="Charge relay system" evidence="1">
    <location>
        <position position="179"/>
    </location>
</feature>
<feature type="active site" description="Charge relay system" evidence="1">
    <location>
        <position position="181"/>
    </location>
</feature>
<feature type="binding site" evidence="1">
    <location>
        <begin position="52"/>
        <end position="54"/>
    </location>
    <ligand>
        <name>L-glutamine</name>
        <dbReference type="ChEBI" id="CHEBI:58359"/>
    </ligand>
</feature>
<feature type="binding site" evidence="1">
    <location>
        <position position="115"/>
    </location>
    <ligand>
        <name>L-glutamine</name>
        <dbReference type="ChEBI" id="CHEBI:58359"/>
    </ligand>
</feature>
<feature type="binding site" evidence="1">
    <location>
        <begin position="143"/>
        <end position="144"/>
    </location>
    <ligand>
        <name>L-glutamine</name>
        <dbReference type="ChEBI" id="CHEBI:58359"/>
    </ligand>
</feature>
<gene>
    <name evidence="1" type="primary">pdxT</name>
    <name type="ordered locus">MA_1566</name>
</gene>
<comment type="function">
    <text evidence="1">Catalyzes the hydrolysis of glutamine to glutamate and ammonia as part of the biosynthesis of pyridoxal 5'-phosphate. The resulting ammonia molecule is channeled to the active site of PdxS.</text>
</comment>
<comment type="catalytic activity">
    <reaction evidence="1">
        <text>aldehydo-D-ribose 5-phosphate + D-glyceraldehyde 3-phosphate + L-glutamine = pyridoxal 5'-phosphate + L-glutamate + phosphate + 3 H2O + H(+)</text>
        <dbReference type="Rhea" id="RHEA:31507"/>
        <dbReference type="ChEBI" id="CHEBI:15377"/>
        <dbReference type="ChEBI" id="CHEBI:15378"/>
        <dbReference type="ChEBI" id="CHEBI:29985"/>
        <dbReference type="ChEBI" id="CHEBI:43474"/>
        <dbReference type="ChEBI" id="CHEBI:58273"/>
        <dbReference type="ChEBI" id="CHEBI:58359"/>
        <dbReference type="ChEBI" id="CHEBI:59776"/>
        <dbReference type="ChEBI" id="CHEBI:597326"/>
        <dbReference type="EC" id="4.3.3.6"/>
    </reaction>
</comment>
<comment type="catalytic activity">
    <reaction evidence="1">
        <text>L-glutamine + H2O = L-glutamate + NH4(+)</text>
        <dbReference type="Rhea" id="RHEA:15889"/>
        <dbReference type="ChEBI" id="CHEBI:15377"/>
        <dbReference type="ChEBI" id="CHEBI:28938"/>
        <dbReference type="ChEBI" id="CHEBI:29985"/>
        <dbReference type="ChEBI" id="CHEBI:58359"/>
        <dbReference type="EC" id="3.5.1.2"/>
    </reaction>
</comment>
<comment type="pathway">
    <text evidence="1">Cofactor biosynthesis; pyridoxal 5'-phosphate biosynthesis.</text>
</comment>
<comment type="subunit">
    <text evidence="1">In the presence of PdxS, forms a dodecamer of heterodimers. Only shows activity in the heterodimer.</text>
</comment>
<comment type="similarity">
    <text evidence="1">Belongs to the glutaminase PdxT/SNO family.</text>
</comment>
<reference key="1">
    <citation type="journal article" date="2002" name="Genome Res.">
        <title>The genome of Methanosarcina acetivorans reveals extensive metabolic and physiological diversity.</title>
        <authorList>
            <person name="Galagan J.E."/>
            <person name="Nusbaum C."/>
            <person name="Roy A."/>
            <person name="Endrizzi M.G."/>
            <person name="Macdonald P."/>
            <person name="FitzHugh W."/>
            <person name="Calvo S."/>
            <person name="Engels R."/>
            <person name="Smirnov S."/>
            <person name="Atnoor D."/>
            <person name="Brown A."/>
            <person name="Allen N."/>
            <person name="Naylor J."/>
            <person name="Stange-Thomann N."/>
            <person name="DeArellano K."/>
            <person name="Johnson R."/>
            <person name="Linton L."/>
            <person name="McEwan P."/>
            <person name="McKernan K."/>
            <person name="Talamas J."/>
            <person name="Tirrell A."/>
            <person name="Ye W."/>
            <person name="Zimmer A."/>
            <person name="Barber R.D."/>
            <person name="Cann I."/>
            <person name="Graham D.E."/>
            <person name="Grahame D.A."/>
            <person name="Guss A.M."/>
            <person name="Hedderich R."/>
            <person name="Ingram-Smith C."/>
            <person name="Kuettner H.C."/>
            <person name="Krzycki J.A."/>
            <person name="Leigh J.A."/>
            <person name="Li W."/>
            <person name="Liu J."/>
            <person name="Mukhopadhyay B."/>
            <person name="Reeve J.N."/>
            <person name="Smith K."/>
            <person name="Springer T.A."/>
            <person name="Umayam L.A."/>
            <person name="White O."/>
            <person name="White R.H."/>
            <person name="de Macario E.C."/>
            <person name="Ferry J.G."/>
            <person name="Jarrell K.F."/>
            <person name="Jing H."/>
            <person name="Macario A.J.L."/>
            <person name="Paulsen I.T."/>
            <person name="Pritchett M."/>
            <person name="Sowers K.R."/>
            <person name="Swanson R.V."/>
            <person name="Zinder S.H."/>
            <person name="Lander E."/>
            <person name="Metcalf W.W."/>
            <person name="Birren B."/>
        </authorList>
    </citation>
    <scope>NUCLEOTIDE SEQUENCE [LARGE SCALE GENOMIC DNA]</scope>
    <source>
        <strain>ATCC 35395 / DSM 2834 / JCM 12185 / C2A</strain>
    </source>
</reference>
<keyword id="KW-0315">Glutamine amidotransferase</keyword>
<keyword id="KW-0378">Hydrolase</keyword>
<keyword id="KW-0456">Lyase</keyword>
<keyword id="KW-0663">Pyridoxal phosphate</keyword>
<keyword id="KW-1185">Reference proteome</keyword>
<organism>
    <name type="scientific">Methanosarcina acetivorans (strain ATCC 35395 / DSM 2834 / JCM 12185 / C2A)</name>
    <dbReference type="NCBI Taxonomy" id="188937"/>
    <lineage>
        <taxon>Archaea</taxon>
        <taxon>Methanobacteriati</taxon>
        <taxon>Methanobacteriota</taxon>
        <taxon>Stenosarchaea group</taxon>
        <taxon>Methanomicrobia</taxon>
        <taxon>Methanosarcinales</taxon>
        <taxon>Methanosarcinaceae</taxon>
        <taxon>Methanosarcina</taxon>
    </lineage>
</organism>
<evidence type="ECO:0000255" key="1">
    <source>
        <dbReference type="HAMAP-Rule" id="MF_01615"/>
    </source>
</evidence>